<evidence type="ECO:0000255" key="1">
    <source>
        <dbReference type="HAMAP-Rule" id="MF_01554"/>
    </source>
</evidence>
<dbReference type="EC" id="5.4.2.10" evidence="1"/>
<dbReference type="EMBL" id="CP000503">
    <property type="protein sequence ID" value="ABM23915.1"/>
    <property type="molecule type" value="Genomic_DNA"/>
</dbReference>
<dbReference type="RefSeq" id="WP_011788439.1">
    <property type="nucleotide sequence ID" value="NC_008750.1"/>
</dbReference>
<dbReference type="SMR" id="A1RGX0"/>
<dbReference type="KEGG" id="shw:Sputw3181_1065"/>
<dbReference type="HOGENOM" id="CLU_016950_7_0_6"/>
<dbReference type="Proteomes" id="UP000002597">
    <property type="component" value="Chromosome"/>
</dbReference>
<dbReference type="GO" id="GO:0005829">
    <property type="term" value="C:cytosol"/>
    <property type="evidence" value="ECO:0007669"/>
    <property type="project" value="TreeGrafter"/>
</dbReference>
<dbReference type="GO" id="GO:0000287">
    <property type="term" value="F:magnesium ion binding"/>
    <property type="evidence" value="ECO:0007669"/>
    <property type="project" value="UniProtKB-UniRule"/>
</dbReference>
<dbReference type="GO" id="GO:0008966">
    <property type="term" value="F:phosphoglucosamine mutase activity"/>
    <property type="evidence" value="ECO:0007669"/>
    <property type="project" value="UniProtKB-UniRule"/>
</dbReference>
<dbReference type="GO" id="GO:0004615">
    <property type="term" value="F:phosphomannomutase activity"/>
    <property type="evidence" value="ECO:0007669"/>
    <property type="project" value="TreeGrafter"/>
</dbReference>
<dbReference type="GO" id="GO:0005975">
    <property type="term" value="P:carbohydrate metabolic process"/>
    <property type="evidence" value="ECO:0007669"/>
    <property type="project" value="InterPro"/>
</dbReference>
<dbReference type="GO" id="GO:0009252">
    <property type="term" value="P:peptidoglycan biosynthetic process"/>
    <property type="evidence" value="ECO:0007669"/>
    <property type="project" value="TreeGrafter"/>
</dbReference>
<dbReference type="GO" id="GO:0006048">
    <property type="term" value="P:UDP-N-acetylglucosamine biosynthetic process"/>
    <property type="evidence" value="ECO:0007669"/>
    <property type="project" value="TreeGrafter"/>
</dbReference>
<dbReference type="CDD" id="cd05802">
    <property type="entry name" value="GlmM"/>
    <property type="match status" value="1"/>
</dbReference>
<dbReference type="FunFam" id="3.30.310.50:FF:000001">
    <property type="entry name" value="Phosphoglucosamine mutase"/>
    <property type="match status" value="1"/>
</dbReference>
<dbReference type="FunFam" id="3.40.120.10:FF:000001">
    <property type="entry name" value="Phosphoglucosamine mutase"/>
    <property type="match status" value="1"/>
</dbReference>
<dbReference type="FunFam" id="3.40.120.10:FF:000003">
    <property type="entry name" value="Phosphoglucosamine mutase"/>
    <property type="match status" value="1"/>
</dbReference>
<dbReference type="Gene3D" id="3.40.120.10">
    <property type="entry name" value="Alpha-D-Glucose-1,6-Bisphosphate, subunit A, domain 3"/>
    <property type="match status" value="3"/>
</dbReference>
<dbReference type="Gene3D" id="3.30.310.50">
    <property type="entry name" value="Alpha-D-phosphohexomutase, C-terminal domain"/>
    <property type="match status" value="1"/>
</dbReference>
<dbReference type="HAMAP" id="MF_01554_B">
    <property type="entry name" value="GlmM_B"/>
    <property type="match status" value="1"/>
</dbReference>
<dbReference type="InterPro" id="IPR005844">
    <property type="entry name" value="A-D-PHexomutase_a/b/a-I"/>
</dbReference>
<dbReference type="InterPro" id="IPR016055">
    <property type="entry name" value="A-D-PHexomutase_a/b/a-I/II/III"/>
</dbReference>
<dbReference type="InterPro" id="IPR005845">
    <property type="entry name" value="A-D-PHexomutase_a/b/a-II"/>
</dbReference>
<dbReference type="InterPro" id="IPR005846">
    <property type="entry name" value="A-D-PHexomutase_a/b/a-III"/>
</dbReference>
<dbReference type="InterPro" id="IPR005843">
    <property type="entry name" value="A-D-PHexomutase_C"/>
</dbReference>
<dbReference type="InterPro" id="IPR036900">
    <property type="entry name" value="A-D-PHexomutase_C_sf"/>
</dbReference>
<dbReference type="InterPro" id="IPR016066">
    <property type="entry name" value="A-D-PHexomutase_CS"/>
</dbReference>
<dbReference type="InterPro" id="IPR005841">
    <property type="entry name" value="Alpha-D-phosphohexomutase_SF"/>
</dbReference>
<dbReference type="InterPro" id="IPR006352">
    <property type="entry name" value="GlmM_bact"/>
</dbReference>
<dbReference type="InterPro" id="IPR050060">
    <property type="entry name" value="Phosphoglucosamine_mutase"/>
</dbReference>
<dbReference type="NCBIfam" id="TIGR01455">
    <property type="entry name" value="glmM"/>
    <property type="match status" value="1"/>
</dbReference>
<dbReference type="NCBIfam" id="NF008139">
    <property type="entry name" value="PRK10887.1"/>
    <property type="match status" value="1"/>
</dbReference>
<dbReference type="PANTHER" id="PTHR42946:SF1">
    <property type="entry name" value="PHOSPHOGLUCOMUTASE (ALPHA-D-GLUCOSE-1,6-BISPHOSPHATE-DEPENDENT)"/>
    <property type="match status" value="1"/>
</dbReference>
<dbReference type="PANTHER" id="PTHR42946">
    <property type="entry name" value="PHOSPHOHEXOSE MUTASE"/>
    <property type="match status" value="1"/>
</dbReference>
<dbReference type="Pfam" id="PF02878">
    <property type="entry name" value="PGM_PMM_I"/>
    <property type="match status" value="1"/>
</dbReference>
<dbReference type="Pfam" id="PF02879">
    <property type="entry name" value="PGM_PMM_II"/>
    <property type="match status" value="1"/>
</dbReference>
<dbReference type="Pfam" id="PF02880">
    <property type="entry name" value="PGM_PMM_III"/>
    <property type="match status" value="1"/>
</dbReference>
<dbReference type="Pfam" id="PF00408">
    <property type="entry name" value="PGM_PMM_IV"/>
    <property type="match status" value="1"/>
</dbReference>
<dbReference type="PRINTS" id="PR00509">
    <property type="entry name" value="PGMPMM"/>
</dbReference>
<dbReference type="SUPFAM" id="SSF55957">
    <property type="entry name" value="Phosphoglucomutase, C-terminal domain"/>
    <property type="match status" value="1"/>
</dbReference>
<dbReference type="SUPFAM" id="SSF53738">
    <property type="entry name" value="Phosphoglucomutase, first 3 domains"/>
    <property type="match status" value="3"/>
</dbReference>
<dbReference type="PROSITE" id="PS00710">
    <property type="entry name" value="PGM_PMM"/>
    <property type="match status" value="1"/>
</dbReference>
<protein>
    <recommendedName>
        <fullName evidence="1">Phosphoglucosamine mutase</fullName>
        <ecNumber evidence="1">5.4.2.10</ecNumber>
    </recommendedName>
</protein>
<comment type="function">
    <text evidence="1">Catalyzes the conversion of glucosamine-6-phosphate to glucosamine-1-phosphate.</text>
</comment>
<comment type="catalytic activity">
    <reaction evidence="1">
        <text>alpha-D-glucosamine 1-phosphate = D-glucosamine 6-phosphate</text>
        <dbReference type="Rhea" id="RHEA:23424"/>
        <dbReference type="ChEBI" id="CHEBI:58516"/>
        <dbReference type="ChEBI" id="CHEBI:58725"/>
        <dbReference type="EC" id="5.4.2.10"/>
    </reaction>
</comment>
<comment type="cofactor">
    <cofactor evidence="1">
        <name>Mg(2+)</name>
        <dbReference type="ChEBI" id="CHEBI:18420"/>
    </cofactor>
    <text evidence="1">Binds 1 Mg(2+) ion per subunit.</text>
</comment>
<comment type="PTM">
    <text evidence="1">Activated by phosphorylation.</text>
</comment>
<comment type="similarity">
    <text evidence="1">Belongs to the phosphohexose mutase family.</text>
</comment>
<reference key="1">
    <citation type="submission" date="2006-12" db="EMBL/GenBank/DDBJ databases">
        <title>Complete sequence of Shewanella sp. W3-18-1.</title>
        <authorList>
            <consortium name="US DOE Joint Genome Institute"/>
            <person name="Copeland A."/>
            <person name="Lucas S."/>
            <person name="Lapidus A."/>
            <person name="Barry K."/>
            <person name="Detter J.C."/>
            <person name="Glavina del Rio T."/>
            <person name="Hammon N."/>
            <person name="Israni S."/>
            <person name="Dalin E."/>
            <person name="Tice H."/>
            <person name="Pitluck S."/>
            <person name="Chain P."/>
            <person name="Malfatti S."/>
            <person name="Shin M."/>
            <person name="Vergez L."/>
            <person name="Schmutz J."/>
            <person name="Larimer F."/>
            <person name="Land M."/>
            <person name="Hauser L."/>
            <person name="Kyrpides N."/>
            <person name="Lykidis A."/>
            <person name="Tiedje J."/>
            <person name="Richardson P."/>
        </authorList>
    </citation>
    <scope>NUCLEOTIDE SEQUENCE [LARGE SCALE GENOMIC DNA]</scope>
    <source>
        <strain>W3-18-1</strain>
    </source>
</reference>
<keyword id="KW-0413">Isomerase</keyword>
<keyword id="KW-0460">Magnesium</keyword>
<keyword id="KW-0479">Metal-binding</keyword>
<keyword id="KW-0597">Phosphoprotein</keyword>
<sequence>MKERKFFGTDGIRGKVGSGQMTPELALKLGWAAGRVLSRSGTKKVIIGKDTRISGYMFESALEAGLSAAGLNVMLMGPMPTPAVAYLTRTFRAEAGVVISASHNPYYDNGIKFFSTDGSKLDDNLELEIEAELEKPLVCVESHLLGKVSRIEDARGRYIEYCKGNFPAEHTLTGLKIVVDCAHGATYHIAPAVFRELGAEVIAIGDKPNGMNINDKVGATSMGKICETVLAESADLGIALDGDGDRIMMVNSKGEVIDGDQILYILACDAKSRGVLRGGVVGTLMSNLGLDLALQALDIPFARSKVGDRYVMELLKELDWRIGGENSGHILNLDHGTTGDGIIAGILVLAAMRRQNATLEELTSAMEMLPQVLVNVRFEGEHDPLKSDKVKAVQAQVESQLGLRGRVLLRKSGTEPLIRVMVEGDDHSAVLAHANLIADAVKSAS</sequence>
<feature type="chain" id="PRO_0000301378" description="Phosphoglucosamine mutase">
    <location>
        <begin position="1"/>
        <end position="445"/>
    </location>
</feature>
<feature type="active site" description="Phosphoserine intermediate" evidence="1">
    <location>
        <position position="102"/>
    </location>
</feature>
<feature type="binding site" description="via phosphate group" evidence="1">
    <location>
        <position position="102"/>
    </location>
    <ligand>
        <name>Mg(2+)</name>
        <dbReference type="ChEBI" id="CHEBI:18420"/>
    </ligand>
</feature>
<feature type="binding site" evidence="1">
    <location>
        <position position="241"/>
    </location>
    <ligand>
        <name>Mg(2+)</name>
        <dbReference type="ChEBI" id="CHEBI:18420"/>
    </ligand>
</feature>
<feature type="binding site" evidence="1">
    <location>
        <position position="243"/>
    </location>
    <ligand>
        <name>Mg(2+)</name>
        <dbReference type="ChEBI" id="CHEBI:18420"/>
    </ligand>
</feature>
<feature type="binding site" evidence="1">
    <location>
        <position position="245"/>
    </location>
    <ligand>
        <name>Mg(2+)</name>
        <dbReference type="ChEBI" id="CHEBI:18420"/>
    </ligand>
</feature>
<feature type="modified residue" description="Phosphoserine" evidence="1">
    <location>
        <position position="102"/>
    </location>
</feature>
<name>GLMM_SHESW</name>
<accession>A1RGX0</accession>
<organism>
    <name type="scientific">Shewanella sp. (strain W3-18-1)</name>
    <dbReference type="NCBI Taxonomy" id="351745"/>
    <lineage>
        <taxon>Bacteria</taxon>
        <taxon>Pseudomonadati</taxon>
        <taxon>Pseudomonadota</taxon>
        <taxon>Gammaproteobacteria</taxon>
        <taxon>Alteromonadales</taxon>
        <taxon>Shewanellaceae</taxon>
        <taxon>Shewanella</taxon>
    </lineage>
</organism>
<proteinExistence type="inferred from homology"/>
<gene>
    <name evidence="1" type="primary">glmM</name>
    <name type="ordered locus">Sputw3181_1065</name>
</gene>